<sequence>MTFINNDAYSTLGINSFDISKKFISKILIIVINKNTILRYLWSVSEYSVHPRIFYQSLFHQ</sequence>
<organism>
    <name type="scientific">Vaccinia virus (strain Western Reserve)</name>
    <name type="common">VACV</name>
    <name type="synonym">Vaccinia virus (strain WR)</name>
    <dbReference type="NCBI Taxonomy" id="10254"/>
    <lineage>
        <taxon>Viruses</taxon>
        <taxon>Varidnaviria</taxon>
        <taxon>Bamfordvirae</taxon>
        <taxon>Nucleocytoviricota</taxon>
        <taxon>Pokkesviricetes</taxon>
        <taxon>Chitovirales</taxon>
        <taxon>Poxviridae</taxon>
        <taxon>Chordopoxvirinae</taxon>
        <taxon>Orthopoxvirus</taxon>
        <taxon>Vaccinia virus</taxon>
    </lineage>
</organism>
<dbReference type="EMBL" id="M15058">
    <property type="protein sequence ID" value="AAA48269.1"/>
    <property type="molecule type" value="Genomic_DNA"/>
</dbReference>
<dbReference type="PIR" id="A03890">
    <property type="entry name" value="QQVZ20"/>
</dbReference>
<protein>
    <recommendedName>
        <fullName>Uncharacterized 7.2 kDa protein</fullName>
    </recommendedName>
</protein>
<accession>P68486</accession>
<accession>P04316</accession>
<name>YVDH_VACCW</name>
<proteinExistence type="predicted"/>
<organismHost>
    <name type="scientific">Bos taurus</name>
    <name type="common">Bovine</name>
    <dbReference type="NCBI Taxonomy" id="9913"/>
</organismHost>
<reference key="1">
    <citation type="journal article" date="1986" name="Virology">
        <title>Nucleotide sequence and genetic map of the 16-kb vaccinia virus HindIII D fragment.</title>
        <authorList>
            <person name="Niles E.G."/>
            <person name="Condit R.C."/>
            <person name="Caro P."/>
            <person name="Davidson K."/>
            <person name="Matusick L."/>
            <person name="Seto J."/>
        </authorList>
    </citation>
    <scope>NUCLEOTIDE SEQUENCE [GENOMIC DNA]</scope>
</reference>
<feature type="chain" id="PRO_0000099699" description="Uncharacterized 7.2 kDa protein">
    <location>
        <begin position="1"/>
        <end position="61"/>
    </location>
</feature>
<gene>
    <name type="ORF">D ORF H</name>
</gene>